<reference key="1">
    <citation type="journal article" date="2011" name="J. Bacteriol.">
        <title>Complete genome sequence of the metabolically versatile plant growth-promoting endophyte, Variovorax paradoxus S110.</title>
        <authorList>
            <person name="Han J.I."/>
            <person name="Choi H.K."/>
            <person name="Lee S.W."/>
            <person name="Orwin P.M."/>
            <person name="Kim J."/>
            <person name="Laroe S.L."/>
            <person name="Kim T.G."/>
            <person name="O'Neil J."/>
            <person name="Leadbetter J.R."/>
            <person name="Lee S.Y."/>
            <person name="Hur C.G."/>
            <person name="Spain J.C."/>
            <person name="Ovchinnikova G."/>
            <person name="Goodwin L."/>
            <person name="Han C."/>
        </authorList>
    </citation>
    <scope>NUCLEOTIDE SEQUENCE [LARGE SCALE GENOMIC DNA]</scope>
    <source>
        <strain>S110</strain>
    </source>
</reference>
<gene>
    <name evidence="1" type="primary">rpoA</name>
    <name type="ordered locus">Vapar_5045</name>
</gene>
<comment type="function">
    <text evidence="1">DNA-dependent RNA polymerase catalyzes the transcription of DNA into RNA using the four ribonucleoside triphosphates as substrates.</text>
</comment>
<comment type="catalytic activity">
    <reaction evidence="1">
        <text>RNA(n) + a ribonucleoside 5'-triphosphate = RNA(n+1) + diphosphate</text>
        <dbReference type="Rhea" id="RHEA:21248"/>
        <dbReference type="Rhea" id="RHEA-COMP:14527"/>
        <dbReference type="Rhea" id="RHEA-COMP:17342"/>
        <dbReference type="ChEBI" id="CHEBI:33019"/>
        <dbReference type="ChEBI" id="CHEBI:61557"/>
        <dbReference type="ChEBI" id="CHEBI:140395"/>
        <dbReference type="EC" id="2.7.7.6"/>
    </reaction>
</comment>
<comment type="subunit">
    <text evidence="1">Homodimer. The RNAP catalytic core consists of 2 alpha, 1 beta, 1 beta' and 1 omega subunit. When a sigma factor is associated with the core the holoenzyme is formed, which can initiate transcription.</text>
</comment>
<comment type="domain">
    <text evidence="1">The N-terminal domain is essential for RNAP assembly and basal transcription, whereas the C-terminal domain is involved in interaction with transcriptional regulators and with upstream promoter elements.</text>
</comment>
<comment type="similarity">
    <text evidence="1">Belongs to the RNA polymerase alpha chain family.</text>
</comment>
<evidence type="ECO:0000255" key="1">
    <source>
        <dbReference type="HAMAP-Rule" id="MF_00059"/>
    </source>
</evidence>
<keyword id="KW-0240">DNA-directed RNA polymerase</keyword>
<keyword id="KW-0548">Nucleotidyltransferase</keyword>
<keyword id="KW-0804">Transcription</keyword>
<keyword id="KW-0808">Transferase</keyword>
<protein>
    <recommendedName>
        <fullName evidence="1">DNA-directed RNA polymerase subunit alpha</fullName>
        <shortName evidence="1">RNAP subunit alpha</shortName>
        <ecNumber evidence="1">2.7.7.6</ecNumber>
    </recommendedName>
    <alternativeName>
        <fullName evidence="1">RNA polymerase subunit alpha</fullName>
    </alternativeName>
    <alternativeName>
        <fullName evidence="1">Transcriptase subunit alpha</fullName>
    </alternativeName>
</protein>
<proteinExistence type="inferred from homology"/>
<dbReference type="EC" id="2.7.7.6" evidence="1"/>
<dbReference type="EMBL" id="CP001635">
    <property type="protein sequence ID" value="ACS21647.1"/>
    <property type="molecule type" value="Genomic_DNA"/>
</dbReference>
<dbReference type="SMR" id="C5CQ75"/>
<dbReference type="STRING" id="543728.Vapar_5045"/>
<dbReference type="KEGG" id="vap:Vapar_5045"/>
<dbReference type="eggNOG" id="COG0202">
    <property type="taxonomic scope" value="Bacteria"/>
</dbReference>
<dbReference type="HOGENOM" id="CLU_053084_0_1_4"/>
<dbReference type="OrthoDB" id="9805706at2"/>
<dbReference type="GO" id="GO:0005737">
    <property type="term" value="C:cytoplasm"/>
    <property type="evidence" value="ECO:0007669"/>
    <property type="project" value="UniProtKB-ARBA"/>
</dbReference>
<dbReference type="GO" id="GO:0000428">
    <property type="term" value="C:DNA-directed RNA polymerase complex"/>
    <property type="evidence" value="ECO:0007669"/>
    <property type="project" value="UniProtKB-KW"/>
</dbReference>
<dbReference type="GO" id="GO:0003677">
    <property type="term" value="F:DNA binding"/>
    <property type="evidence" value="ECO:0007669"/>
    <property type="project" value="UniProtKB-UniRule"/>
</dbReference>
<dbReference type="GO" id="GO:0003899">
    <property type="term" value="F:DNA-directed RNA polymerase activity"/>
    <property type="evidence" value="ECO:0007669"/>
    <property type="project" value="UniProtKB-UniRule"/>
</dbReference>
<dbReference type="GO" id="GO:0046983">
    <property type="term" value="F:protein dimerization activity"/>
    <property type="evidence" value="ECO:0007669"/>
    <property type="project" value="InterPro"/>
</dbReference>
<dbReference type="GO" id="GO:0006351">
    <property type="term" value="P:DNA-templated transcription"/>
    <property type="evidence" value="ECO:0007669"/>
    <property type="project" value="UniProtKB-UniRule"/>
</dbReference>
<dbReference type="CDD" id="cd06928">
    <property type="entry name" value="RNAP_alpha_NTD"/>
    <property type="match status" value="1"/>
</dbReference>
<dbReference type="FunFam" id="1.10.150.20:FF:000001">
    <property type="entry name" value="DNA-directed RNA polymerase subunit alpha"/>
    <property type="match status" value="1"/>
</dbReference>
<dbReference type="FunFam" id="2.170.120.12:FF:000001">
    <property type="entry name" value="DNA-directed RNA polymerase subunit alpha"/>
    <property type="match status" value="1"/>
</dbReference>
<dbReference type="Gene3D" id="1.10.150.20">
    <property type="entry name" value="5' to 3' exonuclease, C-terminal subdomain"/>
    <property type="match status" value="1"/>
</dbReference>
<dbReference type="Gene3D" id="2.170.120.12">
    <property type="entry name" value="DNA-directed RNA polymerase, insert domain"/>
    <property type="match status" value="1"/>
</dbReference>
<dbReference type="Gene3D" id="3.30.1360.10">
    <property type="entry name" value="RNA polymerase, RBP11-like subunit"/>
    <property type="match status" value="1"/>
</dbReference>
<dbReference type="HAMAP" id="MF_00059">
    <property type="entry name" value="RNApol_bact_RpoA"/>
    <property type="match status" value="1"/>
</dbReference>
<dbReference type="InterPro" id="IPR011262">
    <property type="entry name" value="DNA-dir_RNA_pol_insert"/>
</dbReference>
<dbReference type="InterPro" id="IPR011263">
    <property type="entry name" value="DNA-dir_RNA_pol_RpoA/D/Rpb3"/>
</dbReference>
<dbReference type="InterPro" id="IPR011773">
    <property type="entry name" value="DNA-dir_RpoA"/>
</dbReference>
<dbReference type="InterPro" id="IPR036603">
    <property type="entry name" value="RBP11-like"/>
</dbReference>
<dbReference type="InterPro" id="IPR011260">
    <property type="entry name" value="RNAP_asu_C"/>
</dbReference>
<dbReference type="InterPro" id="IPR036643">
    <property type="entry name" value="RNApol_insert_sf"/>
</dbReference>
<dbReference type="NCBIfam" id="NF003513">
    <property type="entry name" value="PRK05182.1-2"/>
    <property type="match status" value="1"/>
</dbReference>
<dbReference type="NCBIfam" id="NF003519">
    <property type="entry name" value="PRK05182.2-5"/>
    <property type="match status" value="1"/>
</dbReference>
<dbReference type="NCBIfam" id="TIGR02027">
    <property type="entry name" value="rpoA"/>
    <property type="match status" value="1"/>
</dbReference>
<dbReference type="Pfam" id="PF01000">
    <property type="entry name" value="RNA_pol_A_bac"/>
    <property type="match status" value="1"/>
</dbReference>
<dbReference type="Pfam" id="PF03118">
    <property type="entry name" value="RNA_pol_A_CTD"/>
    <property type="match status" value="1"/>
</dbReference>
<dbReference type="Pfam" id="PF01193">
    <property type="entry name" value="RNA_pol_L"/>
    <property type="match status" value="1"/>
</dbReference>
<dbReference type="SMART" id="SM00662">
    <property type="entry name" value="RPOLD"/>
    <property type="match status" value="1"/>
</dbReference>
<dbReference type="SUPFAM" id="SSF47789">
    <property type="entry name" value="C-terminal domain of RNA polymerase alpha subunit"/>
    <property type="match status" value="1"/>
</dbReference>
<dbReference type="SUPFAM" id="SSF56553">
    <property type="entry name" value="Insert subdomain of RNA polymerase alpha subunit"/>
    <property type="match status" value="1"/>
</dbReference>
<dbReference type="SUPFAM" id="SSF55257">
    <property type="entry name" value="RBP11-like subunits of RNA polymerase"/>
    <property type="match status" value="1"/>
</dbReference>
<sequence length="329" mass="36182">MQTTLLKPKTIQVEQLAANKAKVTLEPFERGYGHTLGNALRRVLLSSMVGYSATEVTIAGVLHEYSSIDGVQEDVVNILLNLKGVVFKLHNRDEVTLSLRKDGEGPVLASDIQTPHDVEIINPDHVIAHLSQGGKLDMQIKVEKGRGYVPGTMRRYADEPTKSIGRIVLDASFSPVKRVSYTVESARVEQRTDLDKLLVEIETNGAITAEDAVRASAKILVEQLAVFAQLEGGELAAFDAPAPRSAQQFDPILLRPVDELELTVRSANCLKAENIYYIGDLIQRTENELLKTPNLGRKSLNEIKEVLASRGLTLGMKLESWPPAGLDKR</sequence>
<organism>
    <name type="scientific">Variovorax paradoxus (strain S110)</name>
    <dbReference type="NCBI Taxonomy" id="543728"/>
    <lineage>
        <taxon>Bacteria</taxon>
        <taxon>Pseudomonadati</taxon>
        <taxon>Pseudomonadota</taxon>
        <taxon>Betaproteobacteria</taxon>
        <taxon>Burkholderiales</taxon>
        <taxon>Comamonadaceae</taxon>
        <taxon>Variovorax</taxon>
    </lineage>
</organism>
<feature type="chain" id="PRO_1000202361" description="DNA-directed RNA polymerase subunit alpha">
    <location>
        <begin position="1"/>
        <end position="329"/>
    </location>
</feature>
<feature type="region of interest" description="Alpha N-terminal domain (alpha-NTD)" evidence="1">
    <location>
        <begin position="1"/>
        <end position="231"/>
    </location>
</feature>
<feature type="region of interest" description="Alpha C-terminal domain (alpha-CTD)" evidence="1">
    <location>
        <begin position="249"/>
        <end position="329"/>
    </location>
</feature>
<accession>C5CQ75</accession>
<name>RPOA_VARPS</name>